<evidence type="ECO:0000250" key="1"/>
<evidence type="ECO:0000305" key="2"/>
<accession>P75052</accession>
<keyword id="KW-0328">Glycosyltransferase</keyword>
<keyword id="KW-1185">Reference proteome</keyword>
<keyword id="KW-0808">Transferase</keyword>
<proteinExistence type="inferred from homology"/>
<feature type="chain" id="PRO_0000059081" description="Thymidine phosphorylase">
    <location>
        <begin position="1"/>
        <end position="421"/>
    </location>
</feature>
<gene>
    <name type="primary">deoA</name>
    <name type="ordered locus">MPN_064</name>
    <name type="ORF">MP090</name>
</gene>
<reference key="1">
    <citation type="journal article" date="1996" name="Nucleic Acids Res.">
        <title>Complete sequence analysis of the genome of the bacterium Mycoplasma pneumoniae.</title>
        <authorList>
            <person name="Himmelreich R."/>
            <person name="Hilbert H."/>
            <person name="Plagens H."/>
            <person name="Pirkl E."/>
            <person name="Li B.-C."/>
            <person name="Herrmann R."/>
        </authorList>
    </citation>
    <scope>NUCLEOTIDE SEQUENCE [LARGE SCALE GENOMIC DNA]</scope>
    <source>
        <strain>ATCC 29342 / M129 / Subtype 1</strain>
    </source>
</reference>
<name>TYPH_MYCPN</name>
<comment type="function">
    <text>The enzymes which catalyze the reversible phosphorolysis of pyrimidine nucleosides are involved in the degradation of these compounds and in their utilization as carbon and energy sources, or in the rescue of pyrimidine bases for nucleotide synthesis.</text>
</comment>
<comment type="catalytic activity">
    <reaction>
        <text>thymidine + phosphate = 2-deoxy-alpha-D-ribose 1-phosphate + thymine</text>
        <dbReference type="Rhea" id="RHEA:16037"/>
        <dbReference type="ChEBI" id="CHEBI:17748"/>
        <dbReference type="ChEBI" id="CHEBI:17821"/>
        <dbReference type="ChEBI" id="CHEBI:43474"/>
        <dbReference type="ChEBI" id="CHEBI:57259"/>
        <dbReference type="EC" id="2.4.2.4"/>
    </reaction>
</comment>
<comment type="subunit">
    <text evidence="1">Homodimer.</text>
</comment>
<comment type="similarity">
    <text evidence="2">Belongs to the thymidine/pyrimidine-nucleoside phosphorylase family.</text>
</comment>
<organism>
    <name type="scientific">Mycoplasma pneumoniae (strain ATCC 29342 / M129 / Subtype 1)</name>
    <name type="common">Mycoplasmoides pneumoniae</name>
    <dbReference type="NCBI Taxonomy" id="272634"/>
    <lineage>
        <taxon>Bacteria</taxon>
        <taxon>Bacillati</taxon>
        <taxon>Mycoplasmatota</taxon>
        <taxon>Mycoplasmoidales</taxon>
        <taxon>Mycoplasmoidaceae</taxon>
        <taxon>Mycoplasmoides</taxon>
    </lineage>
</organism>
<sequence>MNIVNLISKKQRGKALTETEINWFVHSVNNKSLADYQVSAFLMAVWFQGMNSKELFCLTKAMVKSGESLHFNHHSKLSVDKHSTGGIGDKVSIALIPILTALDYSVAKLSGRGLGYTGGTIDKLEAVGVKTDFTPTEAQNLLDQNDCFIIGQSEGIAPVDKVLYALRDTTATVDSLPLIASSVMSKKLAINNDYIFIDLKYGKGAFCKTKTMAKELAQYMYSIAKQFKRKLYIKLSDMNQVLGKTIGNALEVLEVVHFLKRNWTEVGADFIQLMEQIVTEILIETKRAPNKRAAVALYHATLEGEKPWQRFLKFIELQGSSWERFLDLKELFNPQYKAPVLASQSGTLSYTSPVDLAMVSISLGAGRMVKTDLIDPMAGIKLVKQANEVVKAGDTVLELYSSKPITPAHIEAAQHTIIIKQ</sequence>
<protein>
    <recommendedName>
        <fullName>Thymidine phosphorylase</fullName>
        <ecNumber>2.4.2.4</ecNumber>
    </recommendedName>
    <alternativeName>
        <fullName>TdRPase</fullName>
    </alternativeName>
</protein>
<dbReference type="EC" id="2.4.2.4"/>
<dbReference type="EMBL" id="U00089">
    <property type="protein sequence ID" value="AAB95738.1"/>
    <property type="molecule type" value="Genomic_DNA"/>
</dbReference>
<dbReference type="PIR" id="S73416">
    <property type="entry name" value="S73416"/>
</dbReference>
<dbReference type="RefSeq" id="NP_109752.1">
    <property type="nucleotide sequence ID" value="NC_000912.1"/>
</dbReference>
<dbReference type="RefSeq" id="WP_010874421.1">
    <property type="nucleotide sequence ID" value="NZ_OU342337.1"/>
</dbReference>
<dbReference type="SMR" id="P75052"/>
<dbReference type="IntAct" id="P75052">
    <property type="interactions" value="1"/>
</dbReference>
<dbReference type="STRING" id="272634.MPN_064"/>
<dbReference type="EnsemblBacteria" id="AAB95738">
    <property type="protein sequence ID" value="AAB95738"/>
    <property type="gene ID" value="MPN_064"/>
</dbReference>
<dbReference type="KEGG" id="mpn:MPN_064"/>
<dbReference type="PATRIC" id="fig|272634.6.peg.65"/>
<dbReference type="HOGENOM" id="CLU_025040_0_1_14"/>
<dbReference type="OrthoDB" id="9763887at2"/>
<dbReference type="BioCyc" id="MPNE272634:G1GJ3-100-MONOMER"/>
<dbReference type="BRENDA" id="2.4.2.4">
    <property type="organism ID" value="3534"/>
</dbReference>
<dbReference type="Proteomes" id="UP000000808">
    <property type="component" value="Chromosome"/>
</dbReference>
<dbReference type="GO" id="GO:0005829">
    <property type="term" value="C:cytosol"/>
    <property type="evidence" value="ECO:0007669"/>
    <property type="project" value="TreeGrafter"/>
</dbReference>
<dbReference type="GO" id="GO:0004645">
    <property type="term" value="F:1,4-alpha-oligoglucan phosphorylase activity"/>
    <property type="evidence" value="ECO:0007669"/>
    <property type="project" value="InterPro"/>
</dbReference>
<dbReference type="GO" id="GO:0009032">
    <property type="term" value="F:thymidine phosphorylase activity"/>
    <property type="evidence" value="ECO:0007669"/>
    <property type="project" value="UniProtKB-EC"/>
</dbReference>
<dbReference type="GO" id="GO:0006206">
    <property type="term" value="P:pyrimidine nucleobase metabolic process"/>
    <property type="evidence" value="ECO:0007669"/>
    <property type="project" value="InterPro"/>
</dbReference>
<dbReference type="GO" id="GO:0006213">
    <property type="term" value="P:pyrimidine nucleoside metabolic process"/>
    <property type="evidence" value="ECO:0007669"/>
    <property type="project" value="InterPro"/>
</dbReference>
<dbReference type="FunFam" id="3.40.1030.10:FF:000003">
    <property type="entry name" value="Pyrimidine-nucleoside phosphorylase"/>
    <property type="match status" value="1"/>
</dbReference>
<dbReference type="Gene3D" id="3.40.1030.10">
    <property type="entry name" value="Nucleoside phosphorylase/phosphoribosyltransferase catalytic domain"/>
    <property type="match status" value="1"/>
</dbReference>
<dbReference type="Gene3D" id="3.90.1170.30">
    <property type="entry name" value="Pyrimidine nucleoside phosphorylase-like, C-terminal domain"/>
    <property type="match status" value="1"/>
</dbReference>
<dbReference type="Gene3D" id="1.20.970.10">
    <property type="entry name" value="Transferase, Pyrimidine Nucleoside Phosphorylase, Chain C"/>
    <property type="match status" value="1"/>
</dbReference>
<dbReference type="InterPro" id="IPR000312">
    <property type="entry name" value="Glycosyl_Trfase_fam3"/>
</dbReference>
<dbReference type="InterPro" id="IPR017459">
    <property type="entry name" value="Glycosyl_Trfase_fam3_N_dom"/>
</dbReference>
<dbReference type="InterPro" id="IPR036320">
    <property type="entry name" value="Glycosyl_Trfase_fam3_N_dom_sf"/>
</dbReference>
<dbReference type="InterPro" id="IPR035902">
    <property type="entry name" value="Nuc_phospho_transferase"/>
</dbReference>
<dbReference type="InterPro" id="IPR036566">
    <property type="entry name" value="PYNP-like_C_sf"/>
</dbReference>
<dbReference type="InterPro" id="IPR013102">
    <property type="entry name" value="PYNP_C"/>
</dbReference>
<dbReference type="InterPro" id="IPR018090">
    <property type="entry name" value="Pyrmidine_PPas_bac/euk"/>
</dbReference>
<dbReference type="InterPro" id="IPR017872">
    <property type="entry name" value="Pyrmidine_PPase_CS"/>
</dbReference>
<dbReference type="InterPro" id="IPR000053">
    <property type="entry name" value="Thymidine/pyrmidine_PPase"/>
</dbReference>
<dbReference type="NCBIfam" id="NF004490">
    <property type="entry name" value="PRK05820.1"/>
    <property type="match status" value="1"/>
</dbReference>
<dbReference type="NCBIfam" id="TIGR02644">
    <property type="entry name" value="Y_phosphoryl"/>
    <property type="match status" value="1"/>
</dbReference>
<dbReference type="PANTHER" id="PTHR10515">
    <property type="entry name" value="THYMIDINE PHOSPHORYLASE"/>
    <property type="match status" value="1"/>
</dbReference>
<dbReference type="PANTHER" id="PTHR10515:SF0">
    <property type="entry name" value="THYMIDINE PHOSPHORYLASE"/>
    <property type="match status" value="1"/>
</dbReference>
<dbReference type="Pfam" id="PF02885">
    <property type="entry name" value="Glycos_trans_3N"/>
    <property type="match status" value="1"/>
</dbReference>
<dbReference type="Pfam" id="PF00591">
    <property type="entry name" value="Glycos_transf_3"/>
    <property type="match status" value="1"/>
</dbReference>
<dbReference type="Pfam" id="PF07831">
    <property type="entry name" value="PYNP_C"/>
    <property type="match status" value="1"/>
</dbReference>
<dbReference type="PIRSF" id="PIRSF000478">
    <property type="entry name" value="TP_PyNP"/>
    <property type="match status" value="1"/>
</dbReference>
<dbReference type="SMART" id="SM00941">
    <property type="entry name" value="PYNP_C"/>
    <property type="match status" value="1"/>
</dbReference>
<dbReference type="SUPFAM" id="SSF52418">
    <property type="entry name" value="Nucleoside phosphorylase/phosphoribosyltransferase catalytic domain"/>
    <property type="match status" value="1"/>
</dbReference>
<dbReference type="SUPFAM" id="SSF47648">
    <property type="entry name" value="Nucleoside phosphorylase/phosphoribosyltransferase N-terminal domain"/>
    <property type="match status" value="1"/>
</dbReference>
<dbReference type="SUPFAM" id="SSF54680">
    <property type="entry name" value="Pyrimidine nucleoside phosphorylase C-terminal domain"/>
    <property type="match status" value="1"/>
</dbReference>
<dbReference type="PROSITE" id="PS00647">
    <property type="entry name" value="THYMID_PHOSPHORYLASE"/>
    <property type="match status" value="1"/>
</dbReference>